<gene>
    <name type="primary">SEC62</name>
    <name type="ordered locus">YPL094C</name>
    <name type="ORF">LPG14C</name>
</gene>
<accession>P21825</accession>
<accession>D6W3S3</accession>
<reference key="1">
    <citation type="journal article" date="1989" name="J. Cell Biol.">
        <title>SEC62 encodes a putative membrane protein required for protein translocation into the yeast endoplasmic reticulum.</title>
        <authorList>
            <person name="Deshaies R.J."/>
            <person name="Schekman R."/>
        </authorList>
    </citation>
    <scope>NUCLEOTIDE SEQUENCE [GENOMIC DNA]</scope>
</reference>
<reference key="2">
    <citation type="journal article" date="1997" name="Nature">
        <title>The nucleotide sequence of Saccharomyces cerevisiae chromosome XVI.</title>
        <authorList>
            <person name="Bussey H."/>
            <person name="Storms R.K."/>
            <person name="Ahmed A."/>
            <person name="Albermann K."/>
            <person name="Allen E."/>
            <person name="Ansorge W."/>
            <person name="Araujo R."/>
            <person name="Aparicio A."/>
            <person name="Barrell B.G."/>
            <person name="Badcock K."/>
            <person name="Benes V."/>
            <person name="Botstein D."/>
            <person name="Bowman S."/>
            <person name="Brueckner M."/>
            <person name="Carpenter J."/>
            <person name="Cherry J.M."/>
            <person name="Chung E."/>
            <person name="Churcher C.M."/>
            <person name="Coster F."/>
            <person name="Davis K."/>
            <person name="Davis R.W."/>
            <person name="Dietrich F.S."/>
            <person name="Delius H."/>
            <person name="DiPaolo T."/>
            <person name="Dubois E."/>
            <person name="Duesterhoeft A."/>
            <person name="Duncan M."/>
            <person name="Floeth M."/>
            <person name="Fortin N."/>
            <person name="Friesen J.D."/>
            <person name="Fritz C."/>
            <person name="Goffeau A."/>
            <person name="Hall J."/>
            <person name="Hebling U."/>
            <person name="Heumann K."/>
            <person name="Hilbert H."/>
            <person name="Hillier L.W."/>
            <person name="Hunicke-Smith S."/>
            <person name="Hyman R.W."/>
            <person name="Johnston M."/>
            <person name="Kalman S."/>
            <person name="Kleine K."/>
            <person name="Komp C."/>
            <person name="Kurdi O."/>
            <person name="Lashkari D."/>
            <person name="Lew H."/>
            <person name="Lin A."/>
            <person name="Lin D."/>
            <person name="Louis E.J."/>
            <person name="Marathe R."/>
            <person name="Messenguy F."/>
            <person name="Mewes H.-W."/>
            <person name="Mirtipati S."/>
            <person name="Moestl D."/>
            <person name="Mueller-Auer S."/>
            <person name="Namath A."/>
            <person name="Nentwich U."/>
            <person name="Oefner P."/>
            <person name="Pearson D."/>
            <person name="Petel F.X."/>
            <person name="Pohl T.M."/>
            <person name="Purnelle B."/>
            <person name="Rajandream M.A."/>
            <person name="Rechmann S."/>
            <person name="Rieger M."/>
            <person name="Riles L."/>
            <person name="Roberts D."/>
            <person name="Schaefer M."/>
            <person name="Scharfe M."/>
            <person name="Scherens B."/>
            <person name="Schramm S."/>
            <person name="Schroeder M."/>
            <person name="Sdicu A.-M."/>
            <person name="Tettelin H."/>
            <person name="Urrestarazu L.A."/>
            <person name="Ushinsky S."/>
            <person name="Vierendeels F."/>
            <person name="Vissers S."/>
            <person name="Voss H."/>
            <person name="Walsh S.V."/>
            <person name="Wambutt R."/>
            <person name="Wang Y."/>
            <person name="Wedler E."/>
            <person name="Wedler H."/>
            <person name="Winnett E."/>
            <person name="Zhong W.-W."/>
            <person name="Zollner A."/>
            <person name="Vo D.H."/>
            <person name="Hani J."/>
        </authorList>
    </citation>
    <scope>NUCLEOTIDE SEQUENCE [LARGE SCALE GENOMIC DNA]</scope>
    <source>
        <strain>ATCC 204508 / S288c</strain>
    </source>
</reference>
<reference key="3">
    <citation type="journal article" date="2014" name="G3 (Bethesda)">
        <title>The reference genome sequence of Saccharomyces cerevisiae: Then and now.</title>
        <authorList>
            <person name="Engel S.R."/>
            <person name="Dietrich F.S."/>
            <person name="Fisk D.G."/>
            <person name="Binkley G."/>
            <person name="Balakrishnan R."/>
            <person name="Costanzo M.C."/>
            <person name="Dwight S.S."/>
            <person name="Hitz B.C."/>
            <person name="Karra K."/>
            <person name="Nash R.S."/>
            <person name="Weng S."/>
            <person name="Wong E.D."/>
            <person name="Lloyd P."/>
            <person name="Skrzypek M.S."/>
            <person name="Miyasato S.R."/>
            <person name="Simison M."/>
            <person name="Cherry J.M."/>
        </authorList>
    </citation>
    <scope>GENOME REANNOTATION</scope>
    <source>
        <strain>ATCC 204508 / S288c</strain>
    </source>
</reference>
<reference key="4">
    <citation type="journal article" date="1991" name="Nature">
        <title>Assembly of yeast Sec proteins involved in translocation into the endoplasmic reticulum into a membrane-bound multisubunit complex.</title>
        <authorList>
            <person name="Deshaies R.J."/>
            <person name="Sanders S.L."/>
            <person name="Feldheim D.A."/>
            <person name="Schekman R."/>
        </authorList>
    </citation>
    <scope>IDENTIFICATION IN THE SEC62/63 COMPLEX</scope>
</reference>
<reference key="5">
    <citation type="journal article" date="1995" name="Cell">
        <title>Posttranslational protein transport in yeast reconstituted with a purified complex of Sec proteins and Kar2p.</title>
        <authorList>
            <person name="Panzner S."/>
            <person name="Dreier L."/>
            <person name="Hartmann E."/>
            <person name="Kostka S."/>
            <person name="Rapoport T.A."/>
        </authorList>
    </citation>
    <scope>ASSOCIATION OF THE SEC62/63 COMPLEX WITH THE SEC61 COMPLEX</scope>
</reference>
<reference key="6">
    <citation type="journal article" date="2003" name="Nature">
        <title>Global analysis of protein expression in yeast.</title>
        <authorList>
            <person name="Ghaemmaghami S."/>
            <person name="Huh W.-K."/>
            <person name="Bower K."/>
            <person name="Howson R.W."/>
            <person name="Belle A."/>
            <person name="Dephoure N."/>
            <person name="O'Shea E.K."/>
            <person name="Weissman J.S."/>
        </authorList>
    </citation>
    <scope>LEVEL OF PROTEIN EXPRESSION [LARGE SCALE ANALYSIS]</scope>
</reference>
<reference key="7">
    <citation type="journal article" date="2004" name="Mol. Biol. Cell">
        <title>Interactions between Sec complex and prepro-alpha-factor during posttranslational protein transport into the endoplasmic reticulum.</title>
        <authorList>
            <person name="Plath K."/>
            <person name="Wilkinson B.M."/>
            <person name="Stirling C.J."/>
            <person name="Rapoport T.A."/>
        </authorList>
    </citation>
    <scope>ASSOCIATION WITH THE SIGNAL SEQUENCE</scope>
</reference>
<reference key="8">
    <citation type="journal article" date="2003" name="Yeast">
        <title>Identification of novel protein-protein interactions at the cytosolic surface of the Sec63 complex in the yeast ER membrane.</title>
        <authorList>
            <person name="Willer M."/>
            <person name="Jermy A.J."/>
            <person name="Young B.P."/>
            <person name="Stirling C.J."/>
        </authorList>
    </citation>
    <scope>IDENTIFICATION OF N-TERMINUS</scope>
    <scope>INTERACTION WITH SEC63</scope>
</reference>
<reference key="9">
    <citation type="journal article" date="2006" name="Proc. Natl. Acad. Sci. U.S.A.">
        <title>A global topology map of the Saccharomyces cerevisiae membrane proteome.</title>
        <authorList>
            <person name="Kim H."/>
            <person name="Melen K."/>
            <person name="Oesterberg M."/>
            <person name="von Heijne G."/>
        </authorList>
    </citation>
    <scope>TOPOLOGY [LARGE SCALE ANALYSIS]</scope>
    <source>
        <strain>ATCC 208353 / W303-1A</strain>
    </source>
</reference>
<reference key="10">
    <citation type="journal article" date="2012" name="Proc. Natl. Acad. Sci. U.S.A.">
        <title>N-terminal acetylome analyses and functional insights of the N-terminal acetyltransferase NatB.</title>
        <authorList>
            <person name="Van Damme P."/>
            <person name="Lasa M."/>
            <person name="Polevoda B."/>
            <person name="Gazquez C."/>
            <person name="Elosegui-Artola A."/>
            <person name="Kim D.S."/>
            <person name="De Juan-Pardo E."/>
            <person name="Demeyer K."/>
            <person name="Hole K."/>
            <person name="Larrea E."/>
            <person name="Timmerman E."/>
            <person name="Prieto J."/>
            <person name="Arnesen T."/>
            <person name="Sherman F."/>
            <person name="Gevaert K."/>
            <person name="Aldabe R."/>
        </authorList>
    </citation>
    <scope>ACETYLATION [LARGE SCALE ANALYSIS] AT SER-2</scope>
    <scope>CLEAVAGE OF INITIATOR METHIONINE [LARGE SCALE ANALYSIS]</scope>
    <scope>IDENTIFICATION BY MASS SPECTROMETRY [LARGE SCALE ANALYSIS]</scope>
</reference>
<keyword id="KW-0002">3D-structure</keyword>
<keyword id="KW-0007">Acetylation</keyword>
<keyword id="KW-0256">Endoplasmic reticulum</keyword>
<keyword id="KW-0472">Membrane</keyword>
<keyword id="KW-0653">Protein transport</keyword>
<keyword id="KW-1185">Reference proteome</keyword>
<keyword id="KW-0811">Translocation</keyword>
<keyword id="KW-0812">Transmembrane</keyword>
<keyword id="KW-1133">Transmembrane helix</keyword>
<keyword id="KW-0813">Transport</keyword>
<organism>
    <name type="scientific">Saccharomyces cerevisiae (strain ATCC 204508 / S288c)</name>
    <name type="common">Baker's yeast</name>
    <dbReference type="NCBI Taxonomy" id="559292"/>
    <lineage>
        <taxon>Eukaryota</taxon>
        <taxon>Fungi</taxon>
        <taxon>Dikarya</taxon>
        <taxon>Ascomycota</taxon>
        <taxon>Saccharomycotina</taxon>
        <taxon>Saccharomycetes</taxon>
        <taxon>Saccharomycetales</taxon>
        <taxon>Saccharomycetaceae</taxon>
        <taxon>Saccharomyces</taxon>
    </lineage>
</organism>
<dbReference type="EMBL" id="X51666">
    <property type="protein sequence ID" value="CAB56541.1"/>
    <property type="status" value="ALT_INIT"/>
    <property type="molecule type" value="Genomic_DNA"/>
</dbReference>
<dbReference type="EMBL" id="U43281">
    <property type="protein sequence ID" value="AAB68205.1"/>
    <property type="status" value="ALT_INIT"/>
    <property type="molecule type" value="Genomic_DNA"/>
</dbReference>
<dbReference type="EMBL" id="BK006949">
    <property type="protein sequence ID" value="DAA11339.1"/>
    <property type="molecule type" value="Genomic_DNA"/>
</dbReference>
<dbReference type="PIR" id="A33617">
    <property type="entry name" value="A33617"/>
</dbReference>
<dbReference type="RefSeq" id="NP_015231.2">
    <property type="nucleotide sequence ID" value="NM_001183908.1"/>
</dbReference>
<dbReference type="PDB" id="6ZZZ">
    <property type="method" value="X-ray"/>
    <property type="resolution" value="2.54 A"/>
    <property type="chains" value="A/B=18-145"/>
</dbReference>
<dbReference type="PDB" id="7AFT">
    <property type="method" value="EM"/>
    <property type="resolution" value="4.40 A"/>
    <property type="chains" value="G=1-274"/>
</dbReference>
<dbReference type="PDBsum" id="6ZZZ"/>
<dbReference type="PDBsum" id="7AFT"/>
<dbReference type="EMDB" id="EMD-11774"/>
<dbReference type="SMR" id="P21825"/>
<dbReference type="BioGRID" id="36087">
    <property type="interactions" value="486"/>
</dbReference>
<dbReference type="ComplexPortal" id="CPX-3055">
    <property type="entry name" value="Translocon complex"/>
</dbReference>
<dbReference type="ComplexPortal" id="CPX-3056">
    <property type="entry name" value="SEC62-SEC63 complex"/>
</dbReference>
<dbReference type="DIP" id="DIP-3827N"/>
<dbReference type="FunCoup" id="P21825">
    <property type="interactions" value="183"/>
</dbReference>
<dbReference type="IntAct" id="P21825">
    <property type="interactions" value="51"/>
</dbReference>
<dbReference type="MINT" id="P21825"/>
<dbReference type="STRING" id="4932.YPL094C"/>
<dbReference type="TCDB" id="1.A.15.1.1">
    <property type="family name" value="the non-selective cation channel-2 (nscc2) family"/>
</dbReference>
<dbReference type="iPTMnet" id="P21825"/>
<dbReference type="PaxDb" id="4932-YPL094C"/>
<dbReference type="PeptideAtlas" id="P21825"/>
<dbReference type="DNASU" id="856011"/>
<dbReference type="EnsemblFungi" id="YPL094C_mRNA">
    <property type="protein sequence ID" value="YPL094C"/>
    <property type="gene ID" value="YPL094C"/>
</dbReference>
<dbReference type="GeneID" id="856011"/>
<dbReference type="KEGG" id="sce:YPL094C"/>
<dbReference type="AGR" id="SGD:S000006015"/>
<dbReference type="SGD" id="S000006015">
    <property type="gene designation" value="SEC62"/>
</dbReference>
<dbReference type="VEuPathDB" id="FungiDB:YPL094C"/>
<dbReference type="eggNOG" id="KOG2927">
    <property type="taxonomic scope" value="Eukaryota"/>
</dbReference>
<dbReference type="GeneTree" id="ENSGT00390000002757"/>
<dbReference type="HOGENOM" id="CLU_040936_1_0_1"/>
<dbReference type="InParanoid" id="P21825"/>
<dbReference type="OMA" id="WGWQETK"/>
<dbReference type="OrthoDB" id="200187at2759"/>
<dbReference type="BioCyc" id="YEAST:G3O-33998-MONOMER"/>
<dbReference type="BioGRID-ORCS" id="856011">
    <property type="hits" value="7 hits in 10 CRISPR screens"/>
</dbReference>
<dbReference type="PRO" id="PR:P21825"/>
<dbReference type="Proteomes" id="UP000002311">
    <property type="component" value="Chromosome XVI"/>
</dbReference>
<dbReference type="RNAct" id="P21825">
    <property type="molecule type" value="protein"/>
</dbReference>
<dbReference type="GO" id="GO:0005783">
    <property type="term" value="C:endoplasmic reticulum"/>
    <property type="evidence" value="ECO:0000314"/>
    <property type="project" value="SGD"/>
</dbReference>
<dbReference type="GO" id="GO:0016020">
    <property type="term" value="C:membrane"/>
    <property type="evidence" value="ECO:0000318"/>
    <property type="project" value="GO_Central"/>
</dbReference>
<dbReference type="GO" id="GO:0030867">
    <property type="term" value="C:rough endoplasmic reticulum membrane"/>
    <property type="evidence" value="ECO:0000303"/>
    <property type="project" value="ComplexPortal"/>
</dbReference>
<dbReference type="GO" id="GO:0031207">
    <property type="term" value="C:Sec62/Sec63 complex"/>
    <property type="evidence" value="ECO:0000353"/>
    <property type="project" value="SGD"/>
</dbReference>
<dbReference type="GO" id="GO:0071256">
    <property type="term" value="C:translocon complex"/>
    <property type="evidence" value="ECO:0000353"/>
    <property type="project" value="ComplexPortal"/>
</dbReference>
<dbReference type="GO" id="GO:0008320">
    <property type="term" value="F:protein transmembrane transporter activity"/>
    <property type="evidence" value="ECO:0000314"/>
    <property type="project" value="SGD"/>
</dbReference>
<dbReference type="GO" id="GO:0031204">
    <property type="term" value="P:post-translational protein targeting to membrane, translocation"/>
    <property type="evidence" value="ECO:0000314"/>
    <property type="project" value="ComplexPortal"/>
</dbReference>
<dbReference type="InterPro" id="IPR004728">
    <property type="entry name" value="Sec62"/>
</dbReference>
<dbReference type="InterPro" id="IPR011553">
    <property type="entry name" value="Sec62_asco"/>
</dbReference>
<dbReference type="NCBIfam" id="TIGR00869">
    <property type="entry name" value="sec62"/>
    <property type="match status" value="1"/>
</dbReference>
<dbReference type="PANTHER" id="PTHR12443">
    <property type="entry name" value="TRANSLOCATION PROTEIN SEC62"/>
    <property type="match status" value="1"/>
</dbReference>
<dbReference type="PANTHER" id="PTHR12443:SF9">
    <property type="entry name" value="TRANSLOCATION PROTEIN SEC62"/>
    <property type="match status" value="1"/>
</dbReference>
<dbReference type="Pfam" id="PF03839">
    <property type="entry name" value="Sec62"/>
    <property type="match status" value="1"/>
</dbReference>
<sequence>MSAVGPGSNAGASVNGGSATAIATLLRNHKELKQRQGLFQAKQTDFFRYKRFVRALHSEEYANKSARQPEIYPTIPSNKIEDQLKSREIFIQLIKAQMVIPVKKLHSQECKEHGLKPSKDFPHLIVSNKAQLEADEYFVWNYNPRTYMDYLIVIGVVSIILALVCYPLWPRSMRRGSYYVSLGAFGILAGFFAVAILRLILYVLSLIVYKDVGGFWIFPNLFEDCGVLESFKPLYGFGEKDTYSYKKKLKRMKKKQAKRESNKKKAINEKAEQN</sequence>
<protein>
    <recommendedName>
        <fullName>Translocation protein SEC62</fullName>
    </recommendedName>
    <alternativeName>
        <fullName>Sec62/63 complex 30 kDa subunit</fullName>
    </alternativeName>
</protein>
<proteinExistence type="evidence at protein level"/>
<evidence type="ECO:0000255" key="1"/>
<evidence type="ECO:0000256" key="2">
    <source>
        <dbReference type="SAM" id="MobiDB-lite"/>
    </source>
</evidence>
<evidence type="ECO:0000269" key="3">
    <source>
    </source>
</evidence>
<evidence type="ECO:0000269" key="4">
    <source>
    </source>
</evidence>
<evidence type="ECO:0000305" key="5"/>
<evidence type="ECO:0007744" key="6">
    <source>
    </source>
</evidence>
<evidence type="ECO:0007829" key="7">
    <source>
        <dbReference type="PDB" id="6ZZZ"/>
    </source>
</evidence>
<name>SEC62_YEAST</name>
<comment type="function">
    <text>Acts as a component of the Sec62/63 complex which is involved in SRP-independent post-translational translocation across the endoplasmic reticulum (ER) and functions together with the Sec61 complex and KAR2 in a channel-forming translocon complex. In an initial step, the signal sequence seems to bind simultaneously to SEC61 and SEC62. SEC62 and SEC63 are required for interactions between SEC61 and translocating polypeptides. SEC62 may affect SEC1-polypeptide interactions by increasing the affinity of targeting pathways for SEC61 and/or by modifying SEC61 to allow more efficient polypeptide interaction. A cycle of assembly and disassembly of Sec62/63 complex from SEC61 may govern the activity of the translocon. SEC62 is essential for cell growth.</text>
</comment>
<comment type="subunit">
    <text evidence="4">Component of the heterotetrameric Sec62/63complex composed of SEC62, SEC63, SEC71 and SEC72. The Sec62/63 complex associates with the Sec61 complex to form the Sec complex.</text>
</comment>
<comment type="interaction">
    <interactant intactId="EBI-16632">
        <id>P21825</id>
    </interactant>
    <interactant intactId="EBI-16400">
        <id>P32915</id>
        <label>SEC61</label>
    </interactant>
    <organismsDiffer>false</organismsDiffer>
    <experiments>12</experiments>
</comment>
<comment type="interaction">
    <interactant intactId="EBI-16632">
        <id>P21825</id>
    </interactant>
    <interactant intactId="EBI-16636">
        <id>P14906</id>
        <label>SEC63</label>
    </interactant>
    <organismsDiffer>false</organismsDiffer>
    <experiments>8</experiments>
</comment>
<comment type="interaction">
    <interactant intactId="EBI-16632">
        <id>P21825</id>
    </interactant>
    <interactant intactId="EBI-27827">
        <id>Q04969</id>
        <label>SPC2</label>
    </interactant>
    <organismsDiffer>false</organismsDiffer>
    <experiments>3</experiments>
</comment>
<comment type="subcellular location">
    <subcellularLocation>
        <location>Endoplasmic reticulum membrane</location>
        <topology>Multi-pass membrane protein</topology>
    </subcellularLocation>
</comment>
<comment type="miscellaneous">
    <text evidence="3">Present with 16500 molecules/cell in log phase SD medium.</text>
</comment>
<comment type="similarity">
    <text evidence="5">Belongs to the SEC62 family.</text>
</comment>
<comment type="sequence caution" evidence="5">
    <conflict type="erroneous initiation">
        <sequence resource="EMBL-CDS" id="AAB68205"/>
    </conflict>
</comment>
<comment type="sequence caution" evidence="5">
    <conflict type="erroneous initiation">
        <sequence resource="EMBL-CDS" id="CAB56541"/>
    </conflict>
</comment>
<feature type="initiator methionine" description="Removed" evidence="6">
    <location>
        <position position="1"/>
    </location>
</feature>
<feature type="chain" id="PRO_0000206627" description="Translocation protein SEC62">
    <location>
        <begin position="2"/>
        <end position="274"/>
    </location>
</feature>
<feature type="topological domain" description="Cytoplasmic" evidence="1">
    <location>
        <begin position="2"/>
        <end position="149"/>
    </location>
</feature>
<feature type="transmembrane region" description="Helical" evidence="1">
    <location>
        <begin position="150"/>
        <end position="169"/>
    </location>
</feature>
<feature type="topological domain" description="Lumenal" evidence="1">
    <location>
        <begin position="170"/>
        <end position="183"/>
    </location>
</feature>
<feature type="transmembrane region" description="Helical" evidence="1">
    <location>
        <begin position="184"/>
        <end position="204"/>
    </location>
</feature>
<feature type="topological domain" description="Cytoplasmic" evidence="1">
    <location>
        <begin position="205"/>
        <end position="274"/>
    </location>
</feature>
<feature type="region of interest" description="Disordered" evidence="2">
    <location>
        <begin position="251"/>
        <end position="274"/>
    </location>
</feature>
<feature type="compositionally biased region" description="Basic residues" evidence="2">
    <location>
        <begin position="251"/>
        <end position="265"/>
    </location>
</feature>
<feature type="modified residue" description="N-acetylserine" evidence="6">
    <location>
        <position position="2"/>
    </location>
</feature>
<feature type="helix" evidence="7">
    <location>
        <begin position="19"/>
        <end position="26"/>
    </location>
</feature>
<feature type="helix" evidence="7">
    <location>
        <begin position="30"/>
        <end position="32"/>
    </location>
</feature>
<feature type="strand" evidence="7">
    <location>
        <begin position="35"/>
        <end position="39"/>
    </location>
</feature>
<feature type="strand" evidence="7">
    <location>
        <begin position="42"/>
        <end position="48"/>
    </location>
</feature>
<feature type="helix" evidence="7">
    <location>
        <begin position="49"/>
        <end position="56"/>
    </location>
</feature>
<feature type="helix" evidence="7">
    <location>
        <begin position="59"/>
        <end position="67"/>
    </location>
</feature>
<feature type="turn" evidence="7">
    <location>
        <begin position="69"/>
        <end position="71"/>
    </location>
</feature>
<feature type="helix" evidence="7">
    <location>
        <begin position="79"/>
        <end position="95"/>
    </location>
</feature>
<feature type="strand" evidence="7">
    <location>
        <begin position="98"/>
        <end position="104"/>
    </location>
</feature>
<feature type="helix" evidence="7">
    <location>
        <begin position="107"/>
        <end position="110"/>
    </location>
</feature>
<feature type="turn" evidence="7">
    <location>
        <begin position="111"/>
        <end position="114"/>
    </location>
</feature>
<feature type="strand" evidence="7">
    <location>
        <begin position="123"/>
        <end position="126"/>
    </location>
</feature>
<feature type="strand" evidence="7">
    <location>
        <begin position="137"/>
        <end position="140"/>
    </location>
</feature>